<sequence>MRLTLLLAALLGYIYCQETFVGDQVLEIIPSHEEQIRTLLQLEAEEHLELDFWKSPTIPGETVHVRVPFASIQAVKVFLESQGIDYSIMIEDVQVLLDQEREEMLFNQQRERGGNFNFEAYHTLEEIYQEMDNLVAENPGLVSKVNLGSSFENRPMNVLKFSTGGDKPAIWLDAGIHAREWVTQATALWTANKIASDYGTDPAITSLLNTLDIFLLPVTNPDGYVFSQTTNRMWRKTRSKRSGSGCVGVDPNRNWDANFGGPGASSSPCSDSYHGPKPNSEVEVKSIVDFIKSHGKVKAFITLHSYSQLLMFPYGYKCTKPDDFNELDEVAQKAAQALKRLHGTSYKVGPICSVIYQASGGSIDWAYDLGIKYSFAFELRDTAFYGFLLPAKQILPTAEETWLGLKTIMEHVRDHPY</sequence>
<evidence type="ECO:0000250" key="1">
    <source>
        <dbReference type="UniProtKB" id="P00730"/>
    </source>
</evidence>
<evidence type="ECO:0000250" key="2">
    <source>
        <dbReference type="UniProtKB" id="P00732"/>
    </source>
</evidence>
<evidence type="ECO:0000250" key="3">
    <source>
        <dbReference type="UniProtKB" id="P48052"/>
    </source>
</evidence>
<evidence type="ECO:0000250" key="4">
    <source>
        <dbReference type="UniProtKB" id="Q9UI42"/>
    </source>
</evidence>
<evidence type="ECO:0000255" key="5"/>
<evidence type="ECO:0000255" key="6">
    <source>
        <dbReference type="PROSITE-ProRule" id="PRU01379"/>
    </source>
</evidence>
<evidence type="ECO:0000269" key="7">
    <source>
    </source>
</evidence>
<evidence type="ECO:0000305" key="8"/>
<evidence type="ECO:0000305" key="9">
    <source>
    </source>
</evidence>
<proteinExistence type="evidence at protein level"/>
<keyword id="KW-0121">Carboxypeptidase</keyword>
<keyword id="KW-1015">Disulfide bond</keyword>
<keyword id="KW-0378">Hydrolase</keyword>
<keyword id="KW-0479">Metal-binding</keyword>
<keyword id="KW-0482">Metalloprotease</keyword>
<keyword id="KW-0645">Protease</keyword>
<keyword id="KW-1185">Reference proteome</keyword>
<keyword id="KW-0964">Secreted</keyword>
<keyword id="KW-0732">Signal</keyword>
<keyword id="KW-0862">Zinc</keyword>
<keyword id="KW-0865">Zymogen</keyword>
<accession>P19222</accession>
<accession>Q6LD54</accession>
<organism>
    <name type="scientific">Rattus norvegicus</name>
    <name type="common">Rat</name>
    <dbReference type="NCBI Taxonomy" id="10116"/>
    <lineage>
        <taxon>Eukaryota</taxon>
        <taxon>Metazoa</taxon>
        <taxon>Chordata</taxon>
        <taxon>Craniata</taxon>
        <taxon>Vertebrata</taxon>
        <taxon>Euteleostomi</taxon>
        <taxon>Mammalia</taxon>
        <taxon>Eutheria</taxon>
        <taxon>Euarchontoglires</taxon>
        <taxon>Glires</taxon>
        <taxon>Rodentia</taxon>
        <taxon>Myomorpha</taxon>
        <taxon>Muroidea</taxon>
        <taxon>Muridae</taxon>
        <taxon>Murinae</taxon>
        <taxon>Rattus</taxon>
    </lineage>
</organism>
<gene>
    <name type="primary">Cpa2</name>
</gene>
<reference key="1">
    <citation type="journal article" date="1988" name="J. Biol. Chem.">
        <title>A novel rat carboxypeptidase, CPA2: characterization, molecular cloning, and evolutionary implications on substrate specificity in the carboxypeptidase gene family.</title>
        <authorList>
            <person name="Gardell S.J."/>
            <person name="Craik C.S."/>
            <person name="Clauser E."/>
            <person name="Goldsmith E.J."/>
            <person name="Stewart C.-B."/>
            <person name="Graf M."/>
            <person name="Rutter W.J."/>
        </authorList>
    </citation>
    <scope>NUCLEOTIDE SEQUENCE [GENOMIC DNA]</scope>
    <source>
        <tissue>Pancreas</tissue>
    </source>
</reference>
<reference key="2">
    <citation type="journal article" date="1995" name="J. Biol. Chem.">
        <title>Carboxypeptidase A isoforms produced by distinct genes or alternative splicing in brain and other extrapancreatic tissues.</title>
        <authorList>
            <person name="Normant E."/>
            <person name="Gros C."/>
            <person name="Schwartz J.C."/>
        </authorList>
    </citation>
    <scope>NUCLEOTIDE SEQUENCE [MRNA] OF 131-143</scope>
</reference>
<reference key="3">
    <citation type="journal article" date="1991" name="J. Biol. Chem.">
        <title>Structural evolution of an enzyme specificity. The structure of rat carboxypeptidase A2 at 1.9-A resolution.</title>
        <authorList>
            <person name="Faming Z."/>
            <person name="Kobe B."/>
            <person name="Stewart C.-B."/>
            <person name="Rutter W.J."/>
            <person name="Goldsmith E.J."/>
        </authorList>
    </citation>
    <scope>X-RAY CRYSTALLOGRAPHY (1.9 ANGSTROMS) IN COMPLEX WITH ZINC IONS</scope>
    <scope>DISULFIDE BOND</scope>
</reference>
<name>CBPA2_RAT</name>
<protein>
    <recommendedName>
        <fullName>Carboxypeptidase A2</fullName>
        <ecNumber evidence="3">3.4.17.15</ecNumber>
    </recommendedName>
</protein>
<comment type="function">
    <text evidence="3">Carboxypeptidase that catalyzes the release of a C-terminal amino acid, with a preference for large aromatic C-terminal residues.</text>
</comment>
<comment type="catalytic activity">
    <reaction evidence="3">
        <text>Similar to that of carboxypeptidase A (EC 3.4.17.1), but with a preference for bulkier C-terminal residues.</text>
        <dbReference type="EC" id="3.4.17.15"/>
    </reaction>
</comment>
<comment type="cofactor">
    <cofactor evidence="7">
        <name>Zn(2+)</name>
        <dbReference type="ChEBI" id="CHEBI:29105"/>
    </cofactor>
    <text evidence="7">Binds 1 zinc ion per subunit.</text>
</comment>
<comment type="subcellular location">
    <subcellularLocation>
        <location evidence="4">Secreted</location>
    </subcellularLocation>
</comment>
<comment type="similarity">
    <text evidence="8">Belongs to the peptidase M14 family.</text>
</comment>
<feature type="signal peptide" evidence="5">
    <location>
        <begin position="1"/>
        <end position="16"/>
    </location>
</feature>
<feature type="propeptide" id="PRO_0000004355" description="Activation peptide">
    <location>
        <begin position="17"/>
        <end position="112"/>
    </location>
</feature>
<feature type="chain" id="PRO_0000004356" description="Carboxypeptidase A2">
    <location>
        <begin position="113"/>
        <end position="417"/>
    </location>
</feature>
<feature type="domain" description="Peptidase M14" evidence="6">
    <location>
        <begin position="120"/>
        <end position="412"/>
    </location>
</feature>
<feature type="active site" description="Proton donor/acceptor" evidence="6 9">
    <location>
        <position position="378"/>
    </location>
</feature>
<feature type="binding site" evidence="1">
    <location>
        <begin position="177"/>
        <end position="180"/>
    </location>
    <ligand>
        <name>substrate</name>
    </ligand>
</feature>
<feature type="binding site" evidence="6 7">
    <location>
        <position position="177"/>
    </location>
    <ligand>
        <name>Zn(2+)</name>
        <dbReference type="ChEBI" id="CHEBI:29105"/>
        <note>catalytic</note>
    </ligand>
</feature>
<feature type="binding site" evidence="6 7">
    <location>
        <position position="180"/>
    </location>
    <ligand>
        <name>Zn(2+)</name>
        <dbReference type="ChEBI" id="CHEBI:29105"/>
        <note>catalytic</note>
    </ligand>
</feature>
<feature type="binding site" evidence="1">
    <location>
        <position position="235"/>
    </location>
    <ligand>
        <name>substrate</name>
    </ligand>
</feature>
<feature type="binding site" evidence="1">
    <location>
        <begin position="252"/>
        <end position="253"/>
    </location>
    <ligand>
        <name>substrate</name>
    </ligand>
</feature>
<feature type="binding site" evidence="6 7">
    <location>
        <position position="304"/>
    </location>
    <ligand>
        <name>Zn(2+)</name>
        <dbReference type="ChEBI" id="CHEBI:29105"/>
        <note>catalytic</note>
    </ligand>
</feature>
<feature type="binding site" evidence="1">
    <location>
        <begin position="305"/>
        <end position="306"/>
    </location>
    <ligand>
        <name>substrate</name>
    </ligand>
</feature>
<feature type="binding site" evidence="1">
    <location>
        <position position="356"/>
    </location>
    <ligand>
        <name>substrate</name>
    </ligand>
</feature>
<feature type="disulfide bond" evidence="2">
    <location>
        <begin position="246"/>
        <end position="269"/>
    </location>
</feature>
<feature type="disulfide bond" evidence="2">
    <location>
        <begin position="318"/>
        <end position="352"/>
    </location>
</feature>
<dbReference type="EC" id="3.4.17.15" evidence="3"/>
<dbReference type="EMBL" id="M23721">
    <property type="protein sequence ID" value="AAA40956.1"/>
    <property type="molecule type" value="Genomic_DNA"/>
</dbReference>
<dbReference type="EMBL" id="M23714">
    <property type="protein sequence ID" value="AAA40956.1"/>
    <property type="status" value="JOINED"/>
    <property type="molecule type" value="Genomic_DNA"/>
</dbReference>
<dbReference type="EMBL" id="M23715">
    <property type="protein sequence ID" value="AAA40956.1"/>
    <property type="status" value="JOINED"/>
    <property type="molecule type" value="Genomic_DNA"/>
</dbReference>
<dbReference type="EMBL" id="M23716">
    <property type="protein sequence ID" value="AAA40956.1"/>
    <property type="status" value="JOINED"/>
    <property type="molecule type" value="Genomic_DNA"/>
</dbReference>
<dbReference type="EMBL" id="M23717">
    <property type="protein sequence ID" value="AAA40956.1"/>
    <property type="status" value="JOINED"/>
    <property type="molecule type" value="Genomic_DNA"/>
</dbReference>
<dbReference type="EMBL" id="M23718">
    <property type="protein sequence ID" value="AAA40956.1"/>
    <property type="status" value="JOINED"/>
    <property type="molecule type" value="Genomic_DNA"/>
</dbReference>
<dbReference type="EMBL" id="M23719">
    <property type="protein sequence ID" value="AAA40956.1"/>
    <property type="status" value="JOINED"/>
    <property type="molecule type" value="Genomic_DNA"/>
</dbReference>
<dbReference type="EMBL" id="M23720">
    <property type="protein sequence ID" value="AAA40956.1"/>
    <property type="status" value="JOINED"/>
    <property type="molecule type" value="Genomic_DNA"/>
</dbReference>
<dbReference type="EMBL" id="S79837">
    <property type="protein sequence ID" value="AAP32037.1"/>
    <property type="molecule type" value="mRNA"/>
</dbReference>
<dbReference type="PIR" id="A32128">
    <property type="entry name" value="A32128"/>
</dbReference>
<dbReference type="SMR" id="P19222"/>
<dbReference type="FunCoup" id="P19222">
    <property type="interactions" value="13"/>
</dbReference>
<dbReference type="STRING" id="10116.ENSRNOP00000038495"/>
<dbReference type="MEROPS" id="M14.002"/>
<dbReference type="PhosphoSitePlus" id="P19222"/>
<dbReference type="PaxDb" id="10116-ENSRNOP00000038495"/>
<dbReference type="UCSC" id="RGD:1305563">
    <property type="organism name" value="rat"/>
</dbReference>
<dbReference type="AGR" id="RGD:1305563"/>
<dbReference type="RGD" id="1305563">
    <property type="gene designation" value="Cpa2"/>
</dbReference>
<dbReference type="eggNOG" id="KOG2650">
    <property type="taxonomic scope" value="Eukaryota"/>
</dbReference>
<dbReference type="InParanoid" id="P19222"/>
<dbReference type="PhylomeDB" id="P19222"/>
<dbReference type="SABIO-RK" id="P19222"/>
<dbReference type="PRO" id="PR:P19222"/>
<dbReference type="Proteomes" id="UP000002494">
    <property type="component" value="Unplaced"/>
</dbReference>
<dbReference type="GO" id="GO:0005576">
    <property type="term" value="C:extracellular region"/>
    <property type="evidence" value="ECO:0000266"/>
    <property type="project" value="RGD"/>
</dbReference>
<dbReference type="GO" id="GO:0005615">
    <property type="term" value="C:extracellular space"/>
    <property type="evidence" value="ECO:0000318"/>
    <property type="project" value="GO_Central"/>
</dbReference>
<dbReference type="GO" id="GO:0004180">
    <property type="term" value="F:carboxypeptidase activity"/>
    <property type="evidence" value="ECO:0000266"/>
    <property type="project" value="RGD"/>
</dbReference>
<dbReference type="GO" id="GO:0004181">
    <property type="term" value="F:metallocarboxypeptidase activity"/>
    <property type="evidence" value="ECO:0000250"/>
    <property type="project" value="UniProtKB"/>
</dbReference>
<dbReference type="GO" id="GO:0008270">
    <property type="term" value="F:zinc ion binding"/>
    <property type="evidence" value="ECO:0000266"/>
    <property type="project" value="RGD"/>
</dbReference>
<dbReference type="GO" id="GO:0006508">
    <property type="term" value="P:proteolysis"/>
    <property type="evidence" value="ECO:0000318"/>
    <property type="project" value="GO_Central"/>
</dbReference>
<dbReference type="CDD" id="cd03870">
    <property type="entry name" value="M14_CPA"/>
    <property type="match status" value="1"/>
</dbReference>
<dbReference type="FunFam" id="3.40.630.10:FF:000132">
    <property type="entry name" value="Carboxypeptidase A1"/>
    <property type="match status" value="1"/>
</dbReference>
<dbReference type="FunFam" id="3.30.70.340:FF:000001">
    <property type="entry name" value="Carboxypeptidase A5"/>
    <property type="match status" value="1"/>
</dbReference>
<dbReference type="Gene3D" id="3.30.70.340">
    <property type="entry name" value="Metallocarboxypeptidase-like"/>
    <property type="match status" value="1"/>
</dbReference>
<dbReference type="Gene3D" id="3.40.630.10">
    <property type="entry name" value="Zn peptidases"/>
    <property type="match status" value="1"/>
</dbReference>
<dbReference type="InterPro" id="IPR034248">
    <property type="entry name" value="CPA_M14_CPD"/>
</dbReference>
<dbReference type="InterPro" id="IPR036990">
    <property type="entry name" value="M14A-like_propep"/>
</dbReference>
<dbReference type="InterPro" id="IPR003146">
    <property type="entry name" value="M14A_act_pep"/>
</dbReference>
<dbReference type="InterPro" id="IPR000834">
    <property type="entry name" value="Peptidase_M14"/>
</dbReference>
<dbReference type="PANTHER" id="PTHR11705:SF71">
    <property type="entry name" value="CARBOXYPEPTIDASE A2"/>
    <property type="match status" value="1"/>
</dbReference>
<dbReference type="PANTHER" id="PTHR11705">
    <property type="entry name" value="PROTEASE FAMILY M14 CARBOXYPEPTIDASE A,B"/>
    <property type="match status" value="1"/>
</dbReference>
<dbReference type="Pfam" id="PF00246">
    <property type="entry name" value="Peptidase_M14"/>
    <property type="match status" value="1"/>
</dbReference>
<dbReference type="Pfam" id="PF02244">
    <property type="entry name" value="Propep_M14"/>
    <property type="match status" value="1"/>
</dbReference>
<dbReference type="PRINTS" id="PR00765">
    <property type="entry name" value="CRBOXYPTASEA"/>
</dbReference>
<dbReference type="SMART" id="SM00631">
    <property type="entry name" value="Zn_pept"/>
    <property type="match status" value="1"/>
</dbReference>
<dbReference type="SUPFAM" id="SSF54897">
    <property type="entry name" value="Protease propeptides/inhibitors"/>
    <property type="match status" value="1"/>
</dbReference>
<dbReference type="SUPFAM" id="SSF53187">
    <property type="entry name" value="Zn-dependent exopeptidases"/>
    <property type="match status" value="1"/>
</dbReference>
<dbReference type="PROSITE" id="PS00132">
    <property type="entry name" value="CARBOXYPEPT_ZN_1"/>
    <property type="match status" value="1"/>
</dbReference>
<dbReference type="PROSITE" id="PS00133">
    <property type="entry name" value="CARBOXYPEPT_ZN_2"/>
    <property type="match status" value="1"/>
</dbReference>
<dbReference type="PROSITE" id="PS52035">
    <property type="entry name" value="PEPTIDASE_M14"/>
    <property type="match status" value="1"/>
</dbReference>